<proteinExistence type="evidence at protein level"/>
<sequence>MSVSTLESENAQPVAQTQNSELIYRLEDRPPLPQTLFAACQHLLAMFVAVITPALLICQALGLPAQDTQHIISMSLFASGVASIIQIKAWGPVGSGLLSIQGTSFNFVAPLIMGGTALKTGGADVPTMMAALFGTLMLASCTEMVISRVLHLARRIITPLVSGVVVMIIGLSLIQVGLTSIGGGYAAMSDNTFGAPKNLLLAGVVLALIILLNRQRNPYLRVASLVIAMAAGYALAWFMGMLPESNEPMTQELIMVPTPLYYGLGIEWSLLLPLMLVFMITSLETIGDITATSDVSEQPVSGPLYMKRLKGGVLANGLNSFVSAVFNTFPNSCFGQNNGVIQLTGVASRYVGFVVALMLIVLGLFPAVSGFVQHIPEPVLGGATLVMFGTIAASGVRIVSREPLNRRAILIIALSLAVGLGVSQQPLILQFAPEWLKNLLSSGIAAGGITAIVLNLIFPPEKQ</sequence>
<keyword id="KW-0997">Cell inner membrane</keyword>
<keyword id="KW-1003">Cell membrane</keyword>
<keyword id="KW-0472">Membrane</keyword>
<keyword id="KW-1185">Reference proteome</keyword>
<keyword id="KW-0812">Transmembrane</keyword>
<keyword id="KW-1133">Transmembrane helix</keyword>
<keyword id="KW-0813">Transport</keyword>
<comment type="function">
    <text evidence="2">Specific, proton motive force-dependent high-affinity transporter for xanthine.</text>
</comment>
<comment type="catalytic activity">
    <reaction evidence="2">
        <text>xanthine(in) + H(+)(in) = xanthine(out) + H(+)(out)</text>
        <dbReference type="Rhea" id="RHEA:29663"/>
        <dbReference type="ChEBI" id="CHEBI:15378"/>
        <dbReference type="ChEBI" id="CHEBI:17712"/>
    </reaction>
</comment>
<comment type="activity regulation">
    <text evidence="2">Inhibited by CCCP and N-ethylmaleimide.</text>
</comment>
<comment type="biophysicochemical properties">
    <kinetics>
        <KM evidence="2">2.9 uM for xanthine</KM>
        <Vmax evidence="2">0.59 nmol/min/mg enzyme</Vmax>
    </kinetics>
</comment>
<comment type="subcellular location">
    <subcellularLocation>
        <location evidence="2">Cell inner membrane</location>
        <topology evidence="1">Multi-pass membrane protein</topology>
    </subcellularLocation>
</comment>
<comment type="similarity">
    <text evidence="3">Belongs to the nucleobase:cation symporter-2 (NCS2) (TC 2.A.40) family.</text>
</comment>
<gene>
    <name type="primary">xanP</name>
    <name type="synonym">yicE</name>
    <name type="ordered locus">b3654</name>
    <name type="ordered locus">JW3629</name>
</gene>
<feature type="chain" id="PRO_0000165969" description="Xanthine permease XanP">
    <location>
        <begin position="1"/>
        <end position="463"/>
    </location>
</feature>
<feature type="transmembrane region" description="Helical" evidence="1">
    <location>
        <begin position="43"/>
        <end position="63"/>
    </location>
</feature>
<feature type="transmembrane region" description="Helical" evidence="1">
    <location>
        <begin position="71"/>
        <end position="91"/>
    </location>
</feature>
<feature type="transmembrane region" description="Helical" evidence="1">
    <location>
        <begin position="93"/>
        <end position="113"/>
    </location>
</feature>
<feature type="transmembrane region" description="Helical" evidence="1">
    <location>
        <begin position="126"/>
        <end position="146"/>
    </location>
</feature>
<feature type="transmembrane region" description="Helical" evidence="1">
    <location>
        <begin position="156"/>
        <end position="176"/>
    </location>
</feature>
<feature type="transmembrane region" description="Helical" evidence="1">
    <location>
        <begin position="192"/>
        <end position="212"/>
    </location>
</feature>
<feature type="transmembrane region" description="Helical" evidence="1">
    <location>
        <begin position="222"/>
        <end position="242"/>
    </location>
</feature>
<feature type="transmembrane region" description="Helical" evidence="1">
    <location>
        <begin position="260"/>
        <end position="280"/>
    </location>
</feature>
<feature type="transmembrane region" description="Helical" evidence="1">
    <location>
        <begin position="352"/>
        <end position="372"/>
    </location>
</feature>
<feature type="transmembrane region" description="Helical" evidence="1">
    <location>
        <begin position="379"/>
        <end position="399"/>
    </location>
</feature>
<feature type="transmembrane region" description="Helical" evidence="1">
    <location>
        <begin position="409"/>
        <end position="429"/>
    </location>
</feature>
<feature type="transmembrane region" description="Helical" evidence="1">
    <location>
        <begin position="439"/>
        <end position="459"/>
    </location>
</feature>
<evidence type="ECO:0000255" key="1"/>
<evidence type="ECO:0000269" key="2">
    <source>
    </source>
</evidence>
<evidence type="ECO:0000305" key="3"/>
<reference key="1">
    <citation type="journal article" date="1993" name="Genomics">
        <title>DNA sequence and analysis of 136 kilobases of the Escherichia coli genome: organizational symmetry around the origin of replication.</title>
        <authorList>
            <person name="Burland V.D."/>
            <person name="Plunkett G. III"/>
            <person name="Daniels D.L."/>
            <person name="Blattner F.R."/>
        </authorList>
    </citation>
    <scope>NUCLEOTIDE SEQUENCE [LARGE SCALE GENOMIC DNA]</scope>
    <source>
        <strain>K12 / MG1655 / ATCC 47076</strain>
    </source>
</reference>
<reference key="2">
    <citation type="journal article" date="1997" name="Science">
        <title>The complete genome sequence of Escherichia coli K-12.</title>
        <authorList>
            <person name="Blattner F.R."/>
            <person name="Plunkett G. III"/>
            <person name="Bloch C.A."/>
            <person name="Perna N.T."/>
            <person name="Burland V."/>
            <person name="Riley M."/>
            <person name="Collado-Vides J."/>
            <person name="Glasner J.D."/>
            <person name="Rode C.K."/>
            <person name="Mayhew G.F."/>
            <person name="Gregor J."/>
            <person name="Davis N.W."/>
            <person name="Kirkpatrick H.A."/>
            <person name="Goeden M.A."/>
            <person name="Rose D.J."/>
            <person name="Mau B."/>
            <person name="Shao Y."/>
        </authorList>
    </citation>
    <scope>NUCLEOTIDE SEQUENCE [LARGE SCALE GENOMIC DNA]</scope>
    <source>
        <strain>K12 / MG1655 / ATCC 47076</strain>
    </source>
</reference>
<reference key="3">
    <citation type="journal article" date="2006" name="Mol. Syst. Biol.">
        <title>Highly accurate genome sequences of Escherichia coli K-12 strains MG1655 and W3110.</title>
        <authorList>
            <person name="Hayashi K."/>
            <person name="Morooka N."/>
            <person name="Yamamoto Y."/>
            <person name="Fujita K."/>
            <person name="Isono K."/>
            <person name="Choi S."/>
            <person name="Ohtsubo E."/>
            <person name="Baba T."/>
            <person name="Wanner B.L."/>
            <person name="Mori H."/>
            <person name="Horiuchi T."/>
        </authorList>
    </citation>
    <scope>NUCLEOTIDE SEQUENCE [LARGE SCALE GENOMIC DNA]</scope>
    <source>
        <strain>K12 / W3110 / ATCC 27325 / DSM 5911</strain>
    </source>
</reference>
<reference key="4">
    <citation type="journal article" date="1991" name="Mol. Gen. Genet.">
        <title>Characterization of the Escherichia coli K12 gltS glutamate permease gene.</title>
        <authorList>
            <person name="Kalman M."/>
            <person name="Gentry D."/>
            <person name="Cashel M."/>
        </authorList>
    </citation>
    <scope>NUCLEOTIDE SEQUENCE [GENOMIC DNA] OF 1-7</scope>
    <source>
        <strain>K12</strain>
    </source>
</reference>
<reference key="5">
    <citation type="journal article" date="2005" name="Mol. Membr. Biol.">
        <title>Cloning and functional characterization of two bacterial members of the NAT/NCS2 family in Escherichia coli.</title>
        <authorList>
            <person name="Karatza P."/>
            <person name="Frillingos S."/>
        </authorList>
    </citation>
    <scope>FUNCTION</scope>
    <scope>CATALYTIC ACTIVITY</scope>
    <scope>ACTIVITY REGULATION</scope>
    <scope>BIOPHYSICOCHEMICAL PROPERTIES</scope>
    <scope>SUBCELLULAR LOCATION</scope>
    <source>
        <strain>K12</strain>
    </source>
</reference>
<accession>P0AGM9</accession>
<accession>P27432</accession>
<accession>Q2M7W7</accession>
<dbReference type="EMBL" id="L10328">
    <property type="protein sequence ID" value="AAA62007.1"/>
    <property type="molecule type" value="Genomic_DNA"/>
</dbReference>
<dbReference type="EMBL" id="U00096">
    <property type="protein sequence ID" value="AAC76678.1"/>
    <property type="molecule type" value="Genomic_DNA"/>
</dbReference>
<dbReference type="EMBL" id="AP009048">
    <property type="protein sequence ID" value="BAE77639.1"/>
    <property type="molecule type" value="Genomic_DNA"/>
</dbReference>
<dbReference type="EMBL" id="X17499">
    <property type="status" value="NOT_ANNOTATED_CDS"/>
    <property type="molecule type" value="Genomic_DNA"/>
</dbReference>
<dbReference type="PIR" id="H65166">
    <property type="entry name" value="H65166"/>
</dbReference>
<dbReference type="RefSeq" id="NP_418111.1">
    <property type="nucleotide sequence ID" value="NC_000913.3"/>
</dbReference>
<dbReference type="RefSeq" id="WP_001295238.1">
    <property type="nucleotide sequence ID" value="NZ_SSZK01000043.1"/>
</dbReference>
<dbReference type="SMR" id="P0AGM9"/>
<dbReference type="BioGRID" id="4262570">
    <property type="interactions" value="8"/>
</dbReference>
<dbReference type="FunCoup" id="P0AGM9">
    <property type="interactions" value="137"/>
</dbReference>
<dbReference type="STRING" id="511145.b3654"/>
<dbReference type="TCDB" id="2.A.40.4.2">
    <property type="family name" value="the nucleobase/ascorbate transporter (nat) or nucleobase:cation symporter-2 (ncs2) family"/>
</dbReference>
<dbReference type="PaxDb" id="511145-b3654"/>
<dbReference type="DNASU" id="948172"/>
<dbReference type="EnsemblBacteria" id="AAC76678">
    <property type="protein sequence ID" value="AAC76678"/>
    <property type="gene ID" value="b3654"/>
</dbReference>
<dbReference type="GeneID" id="93778369"/>
<dbReference type="GeneID" id="948172"/>
<dbReference type="KEGG" id="ecj:JW3629"/>
<dbReference type="KEGG" id="eco:b3654"/>
<dbReference type="KEGG" id="ecoc:C3026_19795"/>
<dbReference type="PATRIC" id="fig|511145.12.peg.3774"/>
<dbReference type="EchoBASE" id="EB1180"/>
<dbReference type="eggNOG" id="COG2233">
    <property type="taxonomic scope" value="Bacteria"/>
</dbReference>
<dbReference type="HOGENOM" id="CLU_017959_8_0_6"/>
<dbReference type="InParanoid" id="P0AGM9"/>
<dbReference type="OMA" id="GLGFDWN"/>
<dbReference type="OrthoDB" id="9805749at2"/>
<dbReference type="PhylomeDB" id="P0AGM9"/>
<dbReference type="BioCyc" id="EcoCyc:YICE-MONOMER"/>
<dbReference type="BioCyc" id="MetaCyc:YICE-MONOMER"/>
<dbReference type="SABIO-RK" id="P0AGM9"/>
<dbReference type="PRO" id="PR:P0AGM9"/>
<dbReference type="Proteomes" id="UP000000625">
    <property type="component" value="Chromosome"/>
</dbReference>
<dbReference type="GO" id="GO:0005886">
    <property type="term" value="C:plasma membrane"/>
    <property type="evidence" value="ECO:0000314"/>
    <property type="project" value="EcoCyc"/>
</dbReference>
<dbReference type="GO" id="GO:0042907">
    <property type="term" value="F:xanthine transmembrane transporter activity"/>
    <property type="evidence" value="ECO:0000314"/>
    <property type="project" value="EcoCyc"/>
</dbReference>
<dbReference type="GO" id="GO:0042906">
    <property type="term" value="P:xanthine transport"/>
    <property type="evidence" value="ECO:0000314"/>
    <property type="project" value="EcoCyc"/>
</dbReference>
<dbReference type="InterPro" id="IPR006043">
    <property type="entry name" value="NCS2"/>
</dbReference>
<dbReference type="InterPro" id="IPR006042">
    <property type="entry name" value="Xan_ur_permease"/>
</dbReference>
<dbReference type="NCBIfam" id="TIGR00801">
    <property type="entry name" value="ncs2"/>
    <property type="match status" value="1"/>
</dbReference>
<dbReference type="NCBIfam" id="NF037981">
    <property type="entry name" value="NCS2_1"/>
    <property type="match status" value="1"/>
</dbReference>
<dbReference type="PANTHER" id="PTHR42810">
    <property type="entry name" value="PURINE PERMEASE C1399.01C-RELATED"/>
    <property type="match status" value="1"/>
</dbReference>
<dbReference type="PANTHER" id="PTHR42810:SF2">
    <property type="entry name" value="PURINE PERMEASE C1399.01C-RELATED"/>
    <property type="match status" value="1"/>
</dbReference>
<dbReference type="Pfam" id="PF00860">
    <property type="entry name" value="Xan_ur_permease"/>
    <property type="match status" value="1"/>
</dbReference>
<dbReference type="PROSITE" id="PS01116">
    <property type="entry name" value="XANTH_URACIL_PERMASE"/>
    <property type="match status" value="1"/>
</dbReference>
<name>XANP_ECOLI</name>
<protein>
    <recommendedName>
        <fullName evidence="3">Xanthine permease XanP</fullName>
    </recommendedName>
</protein>
<organism>
    <name type="scientific">Escherichia coli (strain K12)</name>
    <dbReference type="NCBI Taxonomy" id="83333"/>
    <lineage>
        <taxon>Bacteria</taxon>
        <taxon>Pseudomonadati</taxon>
        <taxon>Pseudomonadota</taxon>
        <taxon>Gammaproteobacteria</taxon>
        <taxon>Enterobacterales</taxon>
        <taxon>Enterobacteriaceae</taxon>
        <taxon>Escherichia</taxon>
    </lineage>
</organism>